<organism>
    <name type="scientific">Shewanella pealeana (strain ATCC 700345 / ANG-SQ1)</name>
    <dbReference type="NCBI Taxonomy" id="398579"/>
    <lineage>
        <taxon>Bacteria</taxon>
        <taxon>Pseudomonadati</taxon>
        <taxon>Pseudomonadota</taxon>
        <taxon>Gammaproteobacteria</taxon>
        <taxon>Alteromonadales</taxon>
        <taxon>Shewanellaceae</taxon>
        <taxon>Shewanella</taxon>
    </lineage>
</organism>
<feature type="chain" id="PRO_0000414824" description="23S rRNA (uracil(747)-C(5))-methyltransferase RlmC">
    <location>
        <begin position="1"/>
        <end position="378"/>
    </location>
</feature>
<feature type="active site" description="Nucleophile" evidence="1">
    <location>
        <position position="336"/>
    </location>
</feature>
<feature type="binding site" evidence="1">
    <location>
        <position position="3"/>
    </location>
    <ligand>
        <name>[4Fe-4S] cluster</name>
        <dbReference type="ChEBI" id="CHEBI:49883"/>
    </ligand>
</feature>
<feature type="binding site" evidence="1">
    <location>
        <position position="11"/>
    </location>
    <ligand>
        <name>[4Fe-4S] cluster</name>
        <dbReference type="ChEBI" id="CHEBI:49883"/>
    </ligand>
</feature>
<feature type="binding site" evidence="1">
    <location>
        <position position="14"/>
    </location>
    <ligand>
        <name>[4Fe-4S] cluster</name>
        <dbReference type="ChEBI" id="CHEBI:49883"/>
    </ligand>
</feature>
<feature type="binding site" evidence="1">
    <location>
        <position position="87"/>
    </location>
    <ligand>
        <name>[4Fe-4S] cluster</name>
        <dbReference type="ChEBI" id="CHEBI:49883"/>
    </ligand>
</feature>
<feature type="binding site" evidence="1">
    <location>
        <position position="212"/>
    </location>
    <ligand>
        <name>S-adenosyl-L-methionine</name>
        <dbReference type="ChEBI" id="CHEBI:59789"/>
    </ligand>
</feature>
<feature type="binding site" evidence="1">
    <location>
        <position position="241"/>
    </location>
    <ligand>
        <name>S-adenosyl-L-methionine</name>
        <dbReference type="ChEBI" id="CHEBI:59789"/>
    </ligand>
</feature>
<feature type="binding site" evidence="1">
    <location>
        <position position="262"/>
    </location>
    <ligand>
        <name>S-adenosyl-L-methionine</name>
        <dbReference type="ChEBI" id="CHEBI:59789"/>
    </ligand>
</feature>
<feature type="binding site" evidence="1">
    <location>
        <position position="309"/>
    </location>
    <ligand>
        <name>S-adenosyl-L-methionine</name>
        <dbReference type="ChEBI" id="CHEBI:59789"/>
    </ligand>
</feature>
<accession>A8H8Q9</accession>
<evidence type="ECO:0000255" key="1">
    <source>
        <dbReference type="HAMAP-Rule" id="MF_01012"/>
    </source>
</evidence>
<evidence type="ECO:0000305" key="2"/>
<gene>
    <name evidence="1" type="primary">rlmC</name>
    <name type="ordered locus">Spea_3635</name>
</gene>
<sequence>MKCAHFDQQQCLSCRHIKQSMSVQVAAKSQVLSQLLSDFEVEQWHEPVFGPDSGFRNKAKMVVLGAAHQPILGIVTPTGEPVSLCDCNLYPEDMQLLLHRLEQFVRQAGIPPYNVDKAKGELKFILLTRSQIKGEYLLRFVLKSHKSIERIERELPKLLSEYPQIKVVSVNIQPVHMAILEGEEEIFLTEETRLSEQFNDVPLFIRPKSFFQTHPQIAAKLYQTAREWVAELKPSSLWDLFCGVGGFGLHCASKTIPLTGIEISSEAIACAKISAETMGLTQVDFTALDSTGFAQGCDATDKPDVVIVNPPRRGIGESLCQSLSDFAPKAILYSSCNPHTLAKDLANIQGYHIQKVQLFDMFPHTDHFEVLVMLVKPS</sequence>
<protein>
    <recommendedName>
        <fullName evidence="1">23S rRNA (uracil(747)-C(5))-methyltransferase RlmC</fullName>
        <ecNumber evidence="1">2.1.1.189</ecNumber>
    </recommendedName>
    <alternativeName>
        <fullName evidence="1">23S rRNA(m5U747)-methyltransferase</fullName>
    </alternativeName>
</protein>
<comment type="function">
    <text evidence="1">Catalyzes the formation of 5-methyl-uridine at position 747 (m5U747) in 23S rRNA.</text>
</comment>
<comment type="catalytic activity">
    <reaction evidence="1">
        <text>uridine(747) in 23S rRNA + S-adenosyl-L-methionine = 5-methyluridine(747) in 23S rRNA + S-adenosyl-L-homocysteine + H(+)</text>
        <dbReference type="Rhea" id="RHEA:42628"/>
        <dbReference type="Rhea" id="RHEA-COMP:10154"/>
        <dbReference type="Rhea" id="RHEA-COMP:10155"/>
        <dbReference type="ChEBI" id="CHEBI:15378"/>
        <dbReference type="ChEBI" id="CHEBI:57856"/>
        <dbReference type="ChEBI" id="CHEBI:59789"/>
        <dbReference type="ChEBI" id="CHEBI:65315"/>
        <dbReference type="ChEBI" id="CHEBI:74447"/>
        <dbReference type="EC" id="2.1.1.189"/>
    </reaction>
</comment>
<comment type="similarity">
    <text evidence="1">Belongs to the class I-like SAM-binding methyltransferase superfamily. RNA M5U methyltransferase family. RlmC subfamily.</text>
</comment>
<comment type="sequence caution" evidence="2">
    <conflict type="erroneous initiation">
        <sequence resource="EMBL-CDS" id="ABV88946"/>
    </conflict>
    <text>Truncated N-terminus.</text>
</comment>
<reference key="1">
    <citation type="submission" date="2007-10" db="EMBL/GenBank/DDBJ databases">
        <title>Complete sequence of Shewanella pealeana ATCC 700345.</title>
        <authorList>
            <consortium name="US DOE Joint Genome Institute"/>
            <person name="Copeland A."/>
            <person name="Lucas S."/>
            <person name="Lapidus A."/>
            <person name="Barry K."/>
            <person name="Glavina del Rio T."/>
            <person name="Dalin E."/>
            <person name="Tice H."/>
            <person name="Pitluck S."/>
            <person name="Chertkov O."/>
            <person name="Brettin T."/>
            <person name="Bruce D."/>
            <person name="Detter J.C."/>
            <person name="Han C."/>
            <person name="Schmutz J."/>
            <person name="Larimer F."/>
            <person name="Land M."/>
            <person name="Hauser L."/>
            <person name="Kyrpides N."/>
            <person name="Kim E."/>
            <person name="Zhao J.-S.Z."/>
            <person name="Manno D."/>
            <person name="Hawari J."/>
            <person name="Richardson P."/>
        </authorList>
    </citation>
    <scope>NUCLEOTIDE SEQUENCE [LARGE SCALE GENOMIC DNA]</scope>
    <source>
        <strain>ATCC 700345 / ANG-SQ1</strain>
    </source>
</reference>
<dbReference type="EC" id="2.1.1.189" evidence="1"/>
<dbReference type="EMBL" id="CP000851">
    <property type="protein sequence ID" value="ABV88946.1"/>
    <property type="status" value="ALT_INIT"/>
    <property type="molecule type" value="Genomic_DNA"/>
</dbReference>
<dbReference type="RefSeq" id="WP_041411099.1">
    <property type="nucleotide sequence ID" value="NC_009901.1"/>
</dbReference>
<dbReference type="SMR" id="A8H8Q9"/>
<dbReference type="STRING" id="398579.Spea_3635"/>
<dbReference type="KEGG" id="spl:Spea_3635"/>
<dbReference type="eggNOG" id="COG2265">
    <property type="taxonomic scope" value="Bacteria"/>
</dbReference>
<dbReference type="HOGENOM" id="CLU_014689_0_0_6"/>
<dbReference type="OrthoDB" id="9804590at2"/>
<dbReference type="Proteomes" id="UP000002608">
    <property type="component" value="Chromosome"/>
</dbReference>
<dbReference type="GO" id="GO:0051539">
    <property type="term" value="F:4 iron, 4 sulfur cluster binding"/>
    <property type="evidence" value="ECO:0007669"/>
    <property type="project" value="UniProtKB-KW"/>
</dbReference>
<dbReference type="GO" id="GO:0005506">
    <property type="term" value="F:iron ion binding"/>
    <property type="evidence" value="ECO:0007669"/>
    <property type="project" value="UniProtKB-UniRule"/>
</dbReference>
<dbReference type="GO" id="GO:0070041">
    <property type="term" value="F:rRNA (uridine-C5-)-methyltransferase activity"/>
    <property type="evidence" value="ECO:0007669"/>
    <property type="project" value="UniProtKB-UniRule"/>
</dbReference>
<dbReference type="GO" id="GO:0070475">
    <property type="term" value="P:rRNA base methylation"/>
    <property type="evidence" value="ECO:0007669"/>
    <property type="project" value="TreeGrafter"/>
</dbReference>
<dbReference type="CDD" id="cd02440">
    <property type="entry name" value="AdoMet_MTases"/>
    <property type="match status" value="1"/>
</dbReference>
<dbReference type="Gene3D" id="2.40.50.1070">
    <property type="match status" value="1"/>
</dbReference>
<dbReference type="Gene3D" id="3.40.50.150">
    <property type="entry name" value="Vaccinia Virus protein VP39"/>
    <property type="match status" value="1"/>
</dbReference>
<dbReference type="HAMAP" id="MF_01012">
    <property type="entry name" value="23SrRNA_methyltr_RlmC"/>
    <property type="match status" value="1"/>
</dbReference>
<dbReference type="InterPro" id="IPR011825">
    <property type="entry name" value="23SrRNA_MeTrfase_RlmC"/>
</dbReference>
<dbReference type="InterPro" id="IPR030390">
    <property type="entry name" value="MeTrfase_TrmA_AS"/>
</dbReference>
<dbReference type="InterPro" id="IPR030391">
    <property type="entry name" value="MeTrfase_TrmA_CS"/>
</dbReference>
<dbReference type="InterPro" id="IPR029063">
    <property type="entry name" value="SAM-dependent_MTases_sf"/>
</dbReference>
<dbReference type="InterPro" id="IPR010280">
    <property type="entry name" value="U5_MeTrfase_fam"/>
</dbReference>
<dbReference type="NCBIfam" id="TIGR02085">
    <property type="entry name" value="meth_trns_rumB"/>
    <property type="match status" value="1"/>
</dbReference>
<dbReference type="NCBIfam" id="TIGR00479">
    <property type="entry name" value="rumA"/>
    <property type="match status" value="1"/>
</dbReference>
<dbReference type="PANTHER" id="PTHR11061">
    <property type="entry name" value="RNA M5U METHYLTRANSFERASE"/>
    <property type="match status" value="1"/>
</dbReference>
<dbReference type="PANTHER" id="PTHR11061:SF30">
    <property type="entry name" value="TRNA (URACIL(54)-C(5))-METHYLTRANSFERASE"/>
    <property type="match status" value="1"/>
</dbReference>
<dbReference type="Pfam" id="PF05958">
    <property type="entry name" value="tRNA_U5-meth_tr"/>
    <property type="match status" value="1"/>
</dbReference>
<dbReference type="SUPFAM" id="SSF53335">
    <property type="entry name" value="S-adenosyl-L-methionine-dependent methyltransferases"/>
    <property type="match status" value="1"/>
</dbReference>
<dbReference type="PROSITE" id="PS51687">
    <property type="entry name" value="SAM_MT_RNA_M5U"/>
    <property type="match status" value="1"/>
</dbReference>
<dbReference type="PROSITE" id="PS01230">
    <property type="entry name" value="TRMA_1"/>
    <property type="match status" value="1"/>
</dbReference>
<dbReference type="PROSITE" id="PS01231">
    <property type="entry name" value="TRMA_2"/>
    <property type="match status" value="1"/>
</dbReference>
<keyword id="KW-0004">4Fe-4S</keyword>
<keyword id="KW-0408">Iron</keyword>
<keyword id="KW-0411">Iron-sulfur</keyword>
<keyword id="KW-0479">Metal-binding</keyword>
<keyword id="KW-0489">Methyltransferase</keyword>
<keyword id="KW-1185">Reference proteome</keyword>
<keyword id="KW-0698">rRNA processing</keyword>
<keyword id="KW-0949">S-adenosyl-L-methionine</keyword>
<keyword id="KW-0808">Transferase</keyword>
<name>RLMC_SHEPA</name>
<proteinExistence type="inferred from homology"/>